<comment type="function">
    <text evidence="1">Required for the assembly and/or stability of the 40S ribosomal subunit. Required for the processing of the 20S rRNA-precursor to mature 18S rRNA in a late step of the maturation of 40S ribosomal subunits.</text>
</comment>
<comment type="subunit">
    <text evidence="1">Component of the small ribosomal subunit. Mature ribosomes consist of a small (40S) and a large (60S) subunit. The 40S subunit contains about 33 different proteins and 1 molecule of RNA (18S). The 60S subunit contains about 49 different proteins and 3 molecules of RNA (25S, 5.8S and 5S). Interacts with RPS21.</text>
</comment>
<comment type="subcellular location">
    <subcellularLocation>
        <location evidence="1">Cytoplasm</location>
    </subcellularLocation>
</comment>
<comment type="similarity">
    <text evidence="1">Belongs to the universal ribosomal protein uS2 family.</text>
</comment>
<proteinExistence type="inferred from homology"/>
<gene>
    <name evidence="1" type="primary">RPS0</name>
    <name type="ORF">SNOG_05719</name>
</gene>
<protein>
    <recommendedName>
        <fullName evidence="1">Small ribosomal subunit protein uS2</fullName>
    </recommendedName>
    <alternativeName>
        <fullName evidence="3">40S ribosomal protein S0</fullName>
    </alternativeName>
</protein>
<dbReference type="EMBL" id="CH445332">
    <property type="protein sequence ID" value="EAT86783.2"/>
    <property type="molecule type" value="Genomic_DNA"/>
</dbReference>
<dbReference type="RefSeq" id="XP_001796115.1">
    <property type="nucleotide sequence ID" value="XM_001796063.1"/>
</dbReference>
<dbReference type="SMR" id="Q0UR95"/>
<dbReference type="FunCoup" id="Q0UR95">
    <property type="interactions" value="1161"/>
</dbReference>
<dbReference type="STRING" id="321614.Q0UR95"/>
<dbReference type="EnsemblFungi" id="SNOT_05719">
    <property type="protein sequence ID" value="SNOT_05719"/>
    <property type="gene ID" value="SNOG_05719"/>
</dbReference>
<dbReference type="GeneID" id="5972992"/>
<dbReference type="KEGG" id="pno:SNOG_05719"/>
<dbReference type="VEuPathDB" id="FungiDB:JI435_057190"/>
<dbReference type="eggNOG" id="KOG0830">
    <property type="taxonomic scope" value="Eukaryota"/>
</dbReference>
<dbReference type="HOGENOM" id="CLU_058171_0_1_1"/>
<dbReference type="InParanoid" id="Q0UR95"/>
<dbReference type="OrthoDB" id="414863at2759"/>
<dbReference type="Proteomes" id="UP000001055">
    <property type="component" value="Unassembled WGS sequence"/>
</dbReference>
<dbReference type="GO" id="GO:0022627">
    <property type="term" value="C:cytosolic small ribosomal subunit"/>
    <property type="evidence" value="ECO:0000318"/>
    <property type="project" value="GO_Central"/>
</dbReference>
<dbReference type="GO" id="GO:0003735">
    <property type="term" value="F:structural constituent of ribosome"/>
    <property type="evidence" value="ECO:0000318"/>
    <property type="project" value="GO_Central"/>
</dbReference>
<dbReference type="GO" id="GO:0002181">
    <property type="term" value="P:cytoplasmic translation"/>
    <property type="evidence" value="ECO:0000318"/>
    <property type="project" value="GO_Central"/>
</dbReference>
<dbReference type="GO" id="GO:0000028">
    <property type="term" value="P:ribosomal small subunit assembly"/>
    <property type="evidence" value="ECO:0000318"/>
    <property type="project" value="GO_Central"/>
</dbReference>
<dbReference type="FunFam" id="3.40.50.10490:FF:000010">
    <property type="entry name" value="40S ribosomal protein S0"/>
    <property type="match status" value="1"/>
</dbReference>
<dbReference type="Gene3D" id="3.40.50.10490">
    <property type="entry name" value="Glucose-6-phosphate isomerase like protein, domain 1"/>
    <property type="match status" value="1"/>
</dbReference>
<dbReference type="HAMAP" id="MF_03015">
    <property type="entry name" value="Ribosomal_S2_euk"/>
    <property type="match status" value="1"/>
</dbReference>
<dbReference type="InterPro" id="IPR001865">
    <property type="entry name" value="Ribosomal_uS2"/>
</dbReference>
<dbReference type="InterPro" id="IPR032281">
    <property type="entry name" value="Ribosomal_uS2_C"/>
</dbReference>
<dbReference type="InterPro" id="IPR018130">
    <property type="entry name" value="Ribosomal_uS2_CS"/>
</dbReference>
<dbReference type="InterPro" id="IPR027498">
    <property type="entry name" value="Ribosomal_uS2_euk"/>
</dbReference>
<dbReference type="InterPro" id="IPR005707">
    <property type="entry name" value="Ribosomal_uS2_euk/arc"/>
</dbReference>
<dbReference type="InterPro" id="IPR023591">
    <property type="entry name" value="Ribosomal_uS2_flav_dom_sf"/>
</dbReference>
<dbReference type="NCBIfam" id="TIGR01012">
    <property type="entry name" value="uS2_euk_arch"/>
    <property type="match status" value="1"/>
</dbReference>
<dbReference type="PANTHER" id="PTHR11489">
    <property type="entry name" value="40S RIBOSOMAL PROTEIN SA"/>
    <property type="match status" value="1"/>
</dbReference>
<dbReference type="Pfam" id="PF16122">
    <property type="entry name" value="40S_SA_C"/>
    <property type="match status" value="1"/>
</dbReference>
<dbReference type="Pfam" id="PF00318">
    <property type="entry name" value="Ribosomal_S2"/>
    <property type="match status" value="2"/>
</dbReference>
<dbReference type="PRINTS" id="PR00395">
    <property type="entry name" value="RIBOSOMALS2"/>
</dbReference>
<dbReference type="SUPFAM" id="SSF52313">
    <property type="entry name" value="Ribosomal protein S2"/>
    <property type="match status" value="1"/>
</dbReference>
<dbReference type="PROSITE" id="PS00963">
    <property type="entry name" value="RIBOSOMAL_S2_2"/>
    <property type="match status" value="1"/>
</dbReference>
<name>RSSA_PHANO</name>
<feature type="chain" id="PRO_0000371640" description="Small ribosomal subunit protein uS2">
    <location>
        <begin position="1"/>
        <end position="301"/>
    </location>
</feature>
<feature type="region of interest" description="Disordered" evidence="2">
    <location>
        <begin position="261"/>
        <end position="301"/>
    </location>
</feature>
<feature type="compositionally biased region" description="Low complexity" evidence="2">
    <location>
        <begin position="274"/>
        <end position="295"/>
    </location>
</feature>
<accession>Q0UR95</accession>
<evidence type="ECO:0000255" key="1">
    <source>
        <dbReference type="HAMAP-Rule" id="MF_03015"/>
    </source>
</evidence>
<evidence type="ECO:0000256" key="2">
    <source>
        <dbReference type="SAM" id="MobiDB-lite"/>
    </source>
</evidence>
<evidence type="ECO:0000305" key="3"/>
<keyword id="KW-0963">Cytoplasm</keyword>
<keyword id="KW-0687">Ribonucleoprotein</keyword>
<keyword id="KW-0689">Ribosomal protein</keyword>
<reference key="1">
    <citation type="journal article" date="2007" name="Plant Cell">
        <title>Dothideomycete-plant interactions illuminated by genome sequencing and EST analysis of the wheat pathogen Stagonospora nodorum.</title>
        <authorList>
            <person name="Hane J.K."/>
            <person name="Lowe R.G.T."/>
            <person name="Solomon P.S."/>
            <person name="Tan K.-C."/>
            <person name="Schoch C.L."/>
            <person name="Spatafora J.W."/>
            <person name="Crous P.W."/>
            <person name="Kodira C.D."/>
            <person name="Birren B.W."/>
            <person name="Galagan J.E."/>
            <person name="Torriani S.F.F."/>
            <person name="McDonald B.A."/>
            <person name="Oliver R.P."/>
        </authorList>
    </citation>
    <scope>NUCLEOTIDE SEQUENCE [LARGE SCALE GENOMIC DNA]</scope>
    <source>
        <strain>SN15 / ATCC MYA-4574 / FGSC 10173</strain>
    </source>
</reference>
<organism>
    <name type="scientific">Phaeosphaeria nodorum (strain SN15 / ATCC MYA-4574 / FGSC 10173)</name>
    <name type="common">Glume blotch fungus</name>
    <name type="synonym">Parastagonospora nodorum</name>
    <dbReference type="NCBI Taxonomy" id="321614"/>
    <lineage>
        <taxon>Eukaryota</taxon>
        <taxon>Fungi</taxon>
        <taxon>Dikarya</taxon>
        <taxon>Ascomycota</taxon>
        <taxon>Pezizomycotina</taxon>
        <taxon>Dothideomycetes</taxon>
        <taxon>Pleosporomycetidae</taxon>
        <taxon>Pleosporales</taxon>
        <taxon>Pleosporineae</taxon>
        <taxon>Phaeosphaeriaceae</taxon>
        <taxon>Parastagonospora</taxon>
    </lineage>
</organism>
<sequence>MAPSNLPAIFNPSQQDIEMLLAAQCHLGAKNLQVHMEPYLWKTRPDGVNVINVGKTWEKIVLAARIIVAIDNPADICVISARPYGQRAVLKFAAHTGAVAIAGRFTPGNFTNYITRSFKEPRLIIVTDPRTDAQAIKEASYVNIPVIALCDGDSPTEYVDVAIPTNNKGRHAIGLVWWMLAREVLRLRGTLASREAEWDVMTDLYFYRDPEAEENKDSAGVEEAKVPGADEVGPAAVADGFTSEWEVSGASAGAFTSQAAAATTSWDAEPSTDWAATTGGEAATGEGWGAETTGAQPATQW</sequence>